<comment type="function">
    <text evidence="1">Protein S19 forms a complex with S13 that binds strongly to the 16S ribosomal RNA.</text>
</comment>
<comment type="similarity">
    <text evidence="1">Belongs to the universal ribosomal protein uS19 family.</text>
</comment>
<comment type="sequence caution" evidence="2">
    <conflict type="erroneous initiation">
        <sequence resource="EMBL-CDS" id="BAC17336"/>
    </conflict>
</comment>
<name>RS19_COREF</name>
<keyword id="KW-1185">Reference proteome</keyword>
<keyword id="KW-0687">Ribonucleoprotein</keyword>
<keyword id="KW-0689">Ribosomal protein</keyword>
<keyword id="KW-0694">RNA-binding</keyword>
<keyword id="KW-0699">rRNA-binding</keyword>
<accession>P66483</accession>
<accession>Q8NT03</accession>
<sequence>MPRSLKKGPFVDEHLLNKVDAQNEKGTKQVIKTWSRRSTILPDFIGHTFAVHDGRKHVPVFVDDAMVGHKLGEFAPTKTFKGHVKDDKKGRR</sequence>
<gene>
    <name evidence="1" type="primary">rpsS</name>
    <name type="ordered locus">CE0526</name>
</gene>
<feature type="chain" id="PRO_0000129813" description="Small ribosomal subunit protein uS19">
    <location>
        <begin position="1"/>
        <end position="92"/>
    </location>
</feature>
<proteinExistence type="inferred from homology"/>
<dbReference type="EMBL" id="BA000035">
    <property type="protein sequence ID" value="BAC17336.1"/>
    <property type="status" value="ALT_INIT"/>
    <property type="molecule type" value="Genomic_DNA"/>
</dbReference>
<dbReference type="RefSeq" id="WP_003854296.1">
    <property type="nucleotide sequence ID" value="NZ_GG700687.1"/>
</dbReference>
<dbReference type="SMR" id="P66483"/>
<dbReference type="STRING" id="196164.gene:10740928"/>
<dbReference type="GeneID" id="1021514"/>
<dbReference type="KEGG" id="cef:CE0526"/>
<dbReference type="eggNOG" id="COG0185">
    <property type="taxonomic scope" value="Bacteria"/>
</dbReference>
<dbReference type="HOGENOM" id="CLU_144911_3_1_11"/>
<dbReference type="OrthoDB" id="9797833at2"/>
<dbReference type="Proteomes" id="UP000001409">
    <property type="component" value="Chromosome"/>
</dbReference>
<dbReference type="GO" id="GO:0005737">
    <property type="term" value="C:cytoplasm"/>
    <property type="evidence" value="ECO:0007669"/>
    <property type="project" value="UniProtKB-ARBA"/>
</dbReference>
<dbReference type="GO" id="GO:0015935">
    <property type="term" value="C:small ribosomal subunit"/>
    <property type="evidence" value="ECO:0007669"/>
    <property type="project" value="InterPro"/>
</dbReference>
<dbReference type="GO" id="GO:0019843">
    <property type="term" value="F:rRNA binding"/>
    <property type="evidence" value="ECO:0007669"/>
    <property type="project" value="UniProtKB-UniRule"/>
</dbReference>
<dbReference type="GO" id="GO:0003735">
    <property type="term" value="F:structural constituent of ribosome"/>
    <property type="evidence" value="ECO:0007669"/>
    <property type="project" value="InterPro"/>
</dbReference>
<dbReference type="GO" id="GO:0000028">
    <property type="term" value="P:ribosomal small subunit assembly"/>
    <property type="evidence" value="ECO:0007669"/>
    <property type="project" value="TreeGrafter"/>
</dbReference>
<dbReference type="GO" id="GO:0006412">
    <property type="term" value="P:translation"/>
    <property type="evidence" value="ECO:0007669"/>
    <property type="project" value="UniProtKB-UniRule"/>
</dbReference>
<dbReference type="FunFam" id="3.30.860.10:FF:000001">
    <property type="entry name" value="30S ribosomal protein S19"/>
    <property type="match status" value="1"/>
</dbReference>
<dbReference type="Gene3D" id="3.30.860.10">
    <property type="entry name" value="30s Ribosomal Protein S19, Chain A"/>
    <property type="match status" value="1"/>
</dbReference>
<dbReference type="HAMAP" id="MF_00531">
    <property type="entry name" value="Ribosomal_uS19"/>
    <property type="match status" value="1"/>
</dbReference>
<dbReference type="InterPro" id="IPR002222">
    <property type="entry name" value="Ribosomal_uS19"/>
</dbReference>
<dbReference type="InterPro" id="IPR005732">
    <property type="entry name" value="Ribosomal_uS19_bac-type"/>
</dbReference>
<dbReference type="InterPro" id="IPR020934">
    <property type="entry name" value="Ribosomal_uS19_CS"/>
</dbReference>
<dbReference type="InterPro" id="IPR023575">
    <property type="entry name" value="Ribosomal_uS19_SF"/>
</dbReference>
<dbReference type="NCBIfam" id="TIGR01050">
    <property type="entry name" value="rpsS_bact"/>
    <property type="match status" value="1"/>
</dbReference>
<dbReference type="PANTHER" id="PTHR11880">
    <property type="entry name" value="RIBOSOMAL PROTEIN S19P FAMILY MEMBER"/>
    <property type="match status" value="1"/>
</dbReference>
<dbReference type="PANTHER" id="PTHR11880:SF8">
    <property type="entry name" value="SMALL RIBOSOMAL SUBUNIT PROTEIN US19M"/>
    <property type="match status" value="1"/>
</dbReference>
<dbReference type="Pfam" id="PF00203">
    <property type="entry name" value="Ribosomal_S19"/>
    <property type="match status" value="1"/>
</dbReference>
<dbReference type="PIRSF" id="PIRSF002144">
    <property type="entry name" value="Ribosomal_S19"/>
    <property type="match status" value="1"/>
</dbReference>
<dbReference type="PRINTS" id="PR00975">
    <property type="entry name" value="RIBOSOMALS19"/>
</dbReference>
<dbReference type="SUPFAM" id="SSF54570">
    <property type="entry name" value="Ribosomal protein S19"/>
    <property type="match status" value="1"/>
</dbReference>
<dbReference type="PROSITE" id="PS00323">
    <property type="entry name" value="RIBOSOMAL_S19"/>
    <property type="match status" value="1"/>
</dbReference>
<organism>
    <name type="scientific">Corynebacterium efficiens (strain DSM 44549 / YS-314 / AJ 12310 / JCM 11189 / NBRC 100395)</name>
    <dbReference type="NCBI Taxonomy" id="196164"/>
    <lineage>
        <taxon>Bacteria</taxon>
        <taxon>Bacillati</taxon>
        <taxon>Actinomycetota</taxon>
        <taxon>Actinomycetes</taxon>
        <taxon>Mycobacteriales</taxon>
        <taxon>Corynebacteriaceae</taxon>
        <taxon>Corynebacterium</taxon>
    </lineage>
</organism>
<protein>
    <recommendedName>
        <fullName evidence="1">Small ribosomal subunit protein uS19</fullName>
    </recommendedName>
    <alternativeName>
        <fullName evidence="2">30S ribosomal protein S19</fullName>
    </alternativeName>
</protein>
<evidence type="ECO:0000255" key="1">
    <source>
        <dbReference type="HAMAP-Rule" id="MF_00531"/>
    </source>
</evidence>
<evidence type="ECO:0000305" key="2"/>
<reference key="1">
    <citation type="journal article" date="2003" name="Genome Res.">
        <title>Comparative complete genome sequence analysis of the amino acid replacements responsible for the thermostability of Corynebacterium efficiens.</title>
        <authorList>
            <person name="Nishio Y."/>
            <person name="Nakamura Y."/>
            <person name="Kawarabayasi Y."/>
            <person name="Usuda Y."/>
            <person name="Kimura E."/>
            <person name="Sugimoto S."/>
            <person name="Matsui K."/>
            <person name="Yamagishi A."/>
            <person name="Kikuchi H."/>
            <person name="Ikeo K."/>
            <person name="Gojobori T."/>
        </authorList>
    </citation>
    <scope>NUCLEOTIDE SEQUENCE [LARGE SCALE GENOMIC DNA]</scope>
    <source>
        <strain>DSM 44549 / YS-314 / AJ 12310 / JCM 11189 / NBRC 100395</strain>
    </source>
</reference>